<keyword id="KW-1185">Reference proteome</keyword>
<reference key="1">
    <citation type="submission" date="2008-05" db="EMBL/GenBank/DDBJ databases">
        <title>Complete sequence of Shigella boydii serotype 18 strain BS512.</title>
        <authorList>
            <person name="Rasko D.A."/>
            <person name="Rosovitz M."/>
            <person name="Maurelli A.T."/>
            <person name="Myers G."/>
            <person name="Seshadri R."/>
            <person name="Cer R."/>
            <person name="Jiang L."/>
            <person name="Ravel J."/>
            <person name="Sebastian Y."/>
        </authorList>
    </citation>
    <scope>NUCLEOTIDE SEQUENCE [LARGE SCALE GENOMIC DNA]</scope>
    <source>
        <strain>CDC 3083-94 / BS512</strain>
    </source>
</reference>
<sequence>MATVPTRSGSPRQLTTKQTGDAWEVQARRWLEGKGLRFVAANVNERGGEIDLIMREGWTTVFVEVRYRRSALYGGAAASVTRSKQHKLLQTARLWLARHNGSFDTVDCRFDVVAFTGNEVEWIKDAFNDHS</sequence>
<protein>
    <recommendedName>
        <fullName evidence="1">UPF0102 protein YraN</fullName>
    </recommendedName>
</protein>
<dbReference type="EMBL" id="CP001063">
    <property type="protein sequence ID" value="ACD07473.1"/>
    <property type="molecule type" value="Genomic_DNA"/>
</dbReference>
<dbReference type="RefSeq" id="WP_000246860.1">
    <property type="nucleotide sequence ID" value="NC_010658.1"/>
</dbReference>
<dbReference type="SMR" id="B2U2L9"/>
<dbReference type="STRING" id="344609.SbBS512_E3624"/>
<dbReference type="KEGG" id="sbc:SbBS512_E3624"/>
<dbReference type="HOGENOM" id="CLU_115353_1_0_6"/>
<dbReference type="Proteomes" id="UP000001030">
    <property type="component" value="Chromosome"/>
</dbReference>
<dbReference type="GO" id="GO:0003676">
    <property type="term" value="F:nucleic acid binding"/>
    <property type="evidence" value="ECO:0007669"/>
    <property type="project" value="InterPro"/>
</dbReference>
<dbReference type="Gene3D" id="3.40.1350.10">
    <property type="match status" value="1"/>
</dbReference>
<dbReference type="HAMAP" id="MF_00048">
    <property type="entry name" value="UPF0102"/>
    <property type="match status" value="1"/>
</dbReference>
<dbReference type="InterPro" id="IPR011335">
    <property type="entry name" value="Restrct_endonuc-II-like"/>
</dbReference>
<dbReference type="InterPro" id="IPR011856">
    <property type="entry name" value="tRNA_endonuc-like_dom_sf"/>
</dbReference>
<dbReference type="InterPro" id="IPR003509">
    <property type="entry name" value="UPF0102_YraN-like"/>
</dbReference>
<dbReference type="NCBIfam" id="NF009150">
    <property type="entry name" value="PRK12497.1-3"/>
    <property type="match status" value="1"/>
</dbReference>
<dbReference type="NCBIfam" id="TIGR00252">
    <property type="entry name" value="YraN family protein"/>
    <property type="match status" value="1"/>
</dbReference>
<dbReference type="PANTHER" id="PTHR34039">
    <property type="entry name" value="UPF0102 PROTEIN YRAN"/>
    <property type="match status" value="1"/>
</dbReference>
<dbReference type="PANTHER" id="PTHR34039:SF1">
    <property type="entry name" value="UPF0102 PROTEIN YRAN"/>
    <property type="match status" value="1"/>
</dbReference>
<dbReference type="Pfam" id="PF02021">
    <property type="entry name" value="UPF0102"/>
    <property type="match status" value="1"/>
</dbReference>
<dbReference type="SUPFAM" id="SSF52980">
    <property type="entry name" value="Restriction endonuclease-like"/>
    <property type="match status" value="1"/>
</dbReference>
<name>YRAN_SHIB3</name>
<gene>
    <name evidence="1" type="primary">yraN</name>
    <name type="ordered locus">SbBS512_E3624</name>
</gene>
<feature type="chain" id="PRO_1000091266" description="UPF0102 protein YraN">
    <location>
        <begin position="1"/>
        <end position="131"/>
    </location>
</feature>
<feature type="region of interest" description="Disordered" evidence="2">
    <location>
        <begin position="1"/>
        <end position="20"/>
    </location>
</feature>
<feature type="compositionally biased region" description="Polar residues" evidence="2">
    <location>
        <begin position="1"/>
        <end position="19"/>
    </location>
</feature>
<comment type="similarity">
    <text evidence="1">Belongs to the UPF0102 family.</text>
</comment>
<organism>
    <name type="scientific">Shigella boydii serotype 18 (strain CDC 3083-94 / BS512)</name>
    <dbReference type="NCBI Taxonomy" id="344609"/>
    <lineage>
        <taxon>Bacteria</taxon>
        <taxon>Pseudomonadati</taxon>
        <taxon>Pseudomonadota</taxon>
        <taxon>Gammaproteobacteria</taxon>
        <taxon>Enterobacterales</taxon>
        <taxon>Enterobacteriaceae</taxon>
        <taxon>Shigella</taxon>
    </lineage>
</organism>
<proteinExistence type="inferred from homology"/>
<accession>B2U2L9</accession>
<evidence type="ECO:0000255" key="1">
    <source>
        <dbReference type="HAMAP-Rule" id="MF_00048"/>
    </source>
</evidence>
<evidence type="ECO:0000256" key="2">
    <source>
        <dbReference type="SAM" id="MobiDB-lite"/>
    </source>
</evidence>